<reference key="1">
    <citation type="journal article" date="2004" name="Nature">
        <title>Genome evolution in yeasts.</title>
        <authorList>
            <person name="Dujon B."/>
            <person name="Sherman D."/>
            <person name="Fischer G."/>
            <person name="Durrens P."/>
            <person name="Casaregola S."/>
            <person name="Lafontaine I."/>
            <person name="de Montigny J."/>
            <person name="Marck C."/>
            <person name="Neuveglise C."/>
            <person name="Talla E."/>
            <person name="Goffard N."/>
            <person name="Frangeul L."/>
            <person name="Aigle M."/>
            <person name="Anthouard V."/>
            <person name="Babour A."/>
            <person name="Barbe V."/>
            <person name="Barnay S."/>
            <person name="Blanchin S."/>
            <person name="Beckerich J.-M."/>
            <person name="Beyne E."/>
            <person name="Bleykasten C."/>
            <person name="Boisrame A."/>
            <person name="Boyer J."/>
            <person name="Cattolico L."/>
            <person name="Confanioleri F."/>
            <person name="de Daruvar A."/>
            <person name="Despons L."/>
            <person name="Fabre E."/>
            <person name="Fairhead C."/>
            <person name="Ferry-Dumazet H."/>
            <person name="Groppi A."/>
            <person name="Hantraye F."/>
            <person name="Hennequin C."/>
            <person name="Jauniaux N."/>
            <person name="Joyet P."/>
            <person name="Kachouri R."/>
            <person name="Kerrest A."/>
            <person name="Koszul R."/>
            <person name="Lemaire M."/>
            <person name="Lesur I."/>
            <person name="Ma L."/>
            <person name="Muller H."/>
            <person name="Nicaud J.-M."/>
            <person name="Nikolski M."/>
            <person name="Oztas S."/>
            <person name="Ozier-Kalogeropoulos O."/>
            <person name="Pellenz S."/>
            <person name="Potier S."/>
            <person name="Richard G.-F."/>
            <person name="Straub M.-L."/>
            <person name="Suleau A."/>
            <person name="Swennen D."/>
            <person name="Tekaia F."/>
            <person name="Wesolowski-Louvel M."/>
            <person name="Westhof E."/>
            <person name="Wirth B."/>
            <person name="Zeniou-Meyer M."/>
            <person name="Zivanovic Y."/>
            <person name="Bolotin-Fukuhara M."/>
            <person name="Thierry A."/>
            <person name="Bouchier C."/>
            <person name="Caudron B."/>
            <person name="Scarpelli C."/>
            <person name="Gaillardin C."/>
            <person name="Weissenbach J."/>
            <person name="Wincker P."/>
            <person name="Souciet J.-L."/>
        </authorList>
    </citation>
    <scope>NUCLEOTIDE SEQUENCE [LARGE SCALE GENOMIC DNA]</scope>
    <source>
        <strain>CLIB 122 / E 150</strain>
    </source>
</reference>
<sequence>MEASPKKPEALQRPDIKQQSFAEIYGVPENFLEIEVRSPQTHGIARKMYTDYEIVCRTNIPVFKLKSSVVRRRYSDFECFREILERESTRVSIPSLPGKVFTNRFSDEVIEARREGLEKFLQTVAGHPLLQTGSKVLCAFIQDPQWDKNQWI</sequence>
<organism>
    <name type="scientific">Yarrowia lipolytica (strain CLIB 122 / E 150)</name>
    <name type="common">Yeast</name>
    <name type="synonym">Candida lipolytica</name>
    <dbReference type="NCBI Taxonomy" id="284591"/>
    <lineage>
        <taxon>Eukaryota</taxon>
        <taxon>Fungi</taxon>
        <taxon>Dikarya</taxon>
        <taxon>Ascomycota</taxon>
        <taxon>Saccharomycotina</taxon>
        <taxon>Dipodascomycetes</taxon>
        <taxon>Dipodascales</taxon>
        <taxon>Dipodascales incertae sedis</taxon>
        <taxon>Yarrowia</taxon>
    </lineage>
</organism>
<accession>Q6C2S9</accession>
<protein>
    <recommendedName>
        <fullName>Sorting nexin-3</fullName>
    </recommendedName>
</protein>
<dbReference type="EMBL" id="CR382132">
    <property type="protein sequence ID" value="CAG77840.1"/>
    <property type="molecule type" value="Genomic_DNA"/>
</dbReference>
<dbReference type="RefSeq" id="XP_505033.1">
    <property type="nucleotide sequence ID" value="XM_505033.1"/>
</dbReference>
<dbReference type="SMR" id="Q6C2S9"/>
<dbReference type="FunCoup" id="Q6C2S9">
    <property type="interactions" value="484"/>
</dbReference>
<dbReference type="STRING" id="284591.Q6C2S9"/>
<dbReference type="EnsemblFungi" id="CAG77840">
    <property type="protein sequence ID" value="CAG77840"/>
    <property type="gene ID" value="YALI0_F05456g"/>
</dbReference>
<dbReference type="KEGG" id="yli:2908198"/>
<dbReference type="VEuPathDB" id="FungiDB:YALI0_F05456g"/>
<dbReference type="HOGENOM" id="CLU_057172_2_2_1"/>
<dbReference type="InParanoid" id="Q6C2S9"/>
<dbReference type="OMA" id="NMYTDYE"/>
<dbReference type="OrthoDB" id="1679at4891"/>
<dbReference type="Proteomes" id="UP000001300">
    <property type="component" value="Chromosome F"/>
</dbReference>
<dbReference type="GO" id="GO:0031901">
    <property type="term" value="C:early endosome membrane"/>
    <property type="evidence" value="ECO:0000318"/>
    <property type="project" value="GO_Central"/>
</dbReference>
<dbReference type="GO" id="GO:0000139">
    <property type="term" value="C:Golgi membrane"/>
    <property type="evidence" value="ECO:0007669"/>
    <property type="project" value="UniProtKB-SubCell"/>
</dbReference>
<dbReference type="GO" id="GO:0030904">
    <property type="term" value="C:retromer complex"/>
    <property type="evidence" value="ECO:0000318"/>
    <property type="project" value="GO_Central"/>
</dbReference>
<dbReference type="GO" id="GO:0032266">
    <property type="term" value="F:phosphatidylinositol-3-phosphate binding"/>
    <property type="evidence" value="ECO:0000318"/>
    <property type="project" value="GO_Central"/>
</dbReference>
<dbReference type="GO" id="GO:0032456">
    <property type="term" value="P:endocytic recycling"/>
    <property type="evidence" value="ECO:0000318"/>
    <property type="project" value="GO_Central"/>
</dbReference>
<dbReference type="GO" id="GO:0034499">
    <property type="term" value="P:late endosome to Golgi transport"/>
    <property type="evidence" value="ECO:0000318"/>
    <property type="project" value="GO_Central"/>
</dbReference>
<dbReference type="GO" id="GO:0015031">
    <property type="term" value="P:protein transport"/>
    <property type="evidence" value="ECO:0007669"/>
    <property type="project" value="UniProtKB-KW"/>
</dbReference>
<dbReference type="CDD" id="cd07295">
    <property type="entry name" value="PX_Grd19"/>
    <property type="match status" value="1"/>
</dbReference>
<dbReference type="FunFam" id="3.30.1520.10:FF:000030">
    <property type="entry name" value="Sorting nexin-3, variant"/>
    <property type="match status" value="1"/>
</dbReference>
<dbReference type="Gene3D" id="3.30.1520.10">
    <property type="entry name" value="Phox-like domain"/>
    <property type="match status" value="1"/>
</dbReference>
<dbReference type="InterPro" id="IPR001683">
    <property type="entry name" value="PX_dom"/>
</dbReference>
<dbReference type="InterPro" id="IPR036871">
    <property type="entry name" value="PX_dom_sf"/>
</dbReference>
<dbReference type="InterPro" id="IPR042138">
    <property type="entry name" value="PX_Grd19_PX"/>
</dbReference>
<dbReference type="InterPro" id="IPR051074">
    <property type="entry name" value="Sorting_Nexin"/>
</dbReference>
<dbReference type="PANTHER" id="PTHR45963">
    <property type="entry name" value="RE52028P"/>
    <property type="match status" value="1"/>
</dbReference>
<dbReference type="PANTHER" id="PTHR45963:SF2">
    <property type="entry name" value="RE52028P"/>
    <property type="match status" value="1"/>
</dbReference>
<dbReference type="Pfam" id="PF00787">
    <property type="entry name" value="PX"/>
    <property type="match status" value="1"/>
</dbReference>
<dbReference type="SMART" id="SM00312">
    <property type="entry name" value="PX"/>
    <property type="match status" value="1"/>
</dbReference>
<dbReference type="SUPFAM" id="SSF64268">
    <property type="entry name" value="PX domain"/>
    <property type="match status" value="1"/>
</dbReference>
<dbReference type="PROSITE" id="PS50195">
    <property type="entry name" value="PX"/>
    <property type="match status" value="1"/>
</dbReference>
<keyword id="KW-0963">Cytoplasm</keyword>
<keyword id="KW-0333">Golgi apparatus</keyword>
<keyword id="KW-0446">Lipid-binding</keyword>
<keyword id="KW-0472">Membrane</keyword>
<keyword id="KW-0653">Protein transport</keyword>
<keyword id="KW-1185">Reference proteome</keyword>
<keyword id="KW-0813">Transport</keyword>
<evidence type="ECO:0000250" key="1"/>
<evidence type="ECO:0000255" key="2">
    <source>
        <dbReference type="PROSITE-ProRule" id="PRU00147"/>
    </source>
</evidence>
<evidence type="ECO:0000305" key="3"/>
<comment type="function">
    <text evidence="1">Required for retention of late Golgi membrane proteins. Component of the retrieval machinery that functions by direct interaction with the cytosolic tails of certain TGN membrane proteins during the sorting/budding process at the prevacuolar compartment. Binds phosphatidylinositol 3-phosphate (PtdIns(P3)) (By similarity).</text>
</comment>
<comment type="subcellular location">
    <subcellularLocation>
        <location evidence="1">Cytoplasm</location>
    </subcellularLocation>
    <subcellularLocation>
        <location evidence="3">Golgi apparatus membrane</location>
        <topology evidence="3">Peripheral membrane protein</topology>
        <orientation evidence="3">Cytoplasmic side</orientation>
    </subcellularLocation>
    <subcellularLocation>
        <location evidence="3">Prevacuolar compartment membrane</location>
        <topology evidence="3">Peripheral membrane protein</topology>
        <orientation evidence="3">Cytoplasmic side</orientation>
    </subcellularLocation>
</comment>
<comment type="domain">
    <text evidence="1">The PX domain binds phosphatidylinositol 3-phosphate which is necessary for peripheral membrane localization.</text>
</comment>
<comment type="similarity">
    <text evidence="3">Belongs to the sorting nexin family.</text>
</comment>
<gene>
    <name type="primary">SNX3</name>
    <name type="ordered locus">YALI0F05456g</name>
</gene>
<proteinExistence type="inferred from homology"/>
<feature type="chain" id="PRO_0000238592" description="Sorting nexin-3">
    <location>
        <begin position="1"/>
        <end position="152"/>
    </location>
</feature>
<feature type="domain" description="PX" evidence="2">
    <location>
        <begin position="30"/>
        <end position="147"/>
    </location>
</feature>
<feature type="binding site" evidence="1">
    <location>
        <position position="73"/>
    </location>
    <ligand>
        <name>a 1,2-diacyl-sn-glycero-3-phospho-(1D-myo-inositol-3-phosphate)</name>
        <dbReference type="ChEBI" id="CHEBI:58088"/>
    </ligand>
</feature>
<feature type="binding site" evidence="1">
    <location>
        <position position="75"/>
    </location>
    <ligand>
        <name>a 1,2-diacyl-sn-glycero-3-phospho-(1D-myo-inositol-3-phosphate)</name>
        <dbReference type="ChEBI" id="CHEBI:58088"/>
    </ligand>
</feature>
<feature type="binding site" evidence="1">
    <location>
        <position position="99"/>
    </location>
    <ligand>
        <name>a 1,2-diacyl-sn-glycero-3-phospho-(1D-myo-inositol-3-phosphate)</name>
        <dbReference type="ChEBI" id="CHEBI:58088"/>
    </ligand>
</feature>
<feature type="binding site" evidence="1">
    <location>
        <position position="104"/>
    </location>
    <ligand>
        <name>a 1,2-diacyl-sn-glycero-3-phospho-(1D-myo-inositol-3-phosphate)</name>
        <dbReference type="ChEBI" id="CHEBI:58088"/>
    </ligand>
</feature>
<feature type="binding site" evidence="1">
    <location>
        <position position="113"/>
    </location>
    <ligand>
        <name>a 1,2-diacyl-sn-glycero-3-phospho-(1D-myo-inositol-3-phosphate)</name>
        <dbReference type="ChEBI" id="CHEBI:58088"/>
    </ligand>
</feature>
<name>SNX3_YARLI</name>